<comment type="function">
    <text evidence="5">May be required for stable YIPF1 and YIPF2 protein expression.</text>
</comment>
<comment type="subunit">
    <text evidence="5">Predominantly interacts with YIPF1 or YIPF2, but may also form a ternary complex with YIPF1 and YIPF2. This interaction may stabilize YIPF1 and YIPF2.</text>
</comment>
<comment type="interaction">
    <interactant intactId="EBI-751210">
        <id>Q96EC8</id>
    </interactant>
    <interactant intactId="EBI-4290634">
        <id>Q9BQE5</id>
        <label>APOL2</label>
    </interactant>
    <organismsDiffer>false</organismsDiffer>
    <experiments>3</experiments>
</comment>
<comment type="interaction">
    <interactant intactId="EBI-751210">
        <id>Q96EC8</id>
    </interactant>
    <interactant intactId="EBI-12701138">
        <id>P41181</id>
        <label>AQP2</label>
    </interactant>
    <organismsDiffer>false</organismsDiffer>
    <experiments>3</experiments>
</comment>
<comment type="interaction">
    <interactant intactId="EBI-751210">
        <id>Q96EC8</id>
    </interactant>
    <interactant intactId="EBI-13059134">
        <id>Q13520</id>
        <label>AQP6</label>
    </interactant>
    <organismsDiffer>false</organismsDiffer>
    <experiments>3</experiments>
</comment>
<comment type="interaction">
    <interactant intactId="EBI-751210">
        <id>Q96EC8</id>
    </interactant>
    <interactant intactId="EBI-11343438">
        <id>Q3SXY8</id>
        <label>ARL13B</label>
    </interactant>
    <organismsDiffer>false</organismsDiffer>
    <experiments>3</experiments>
</comment>
<comment type="interaction">
    <interactant intactId="EBI-751210">
        <id>Q96EC8</id>
    </interactant>
    <interactant intactId="EBI-12935759">
        <id>O15342</id>
        <label>ATP6V0E1</label>
    </interactant>
    <organismsDiffer>false</organismsDiffer>
    <experiments>3</experiments>
</comment>
<comment type="interaction">
    <interactant intactId="EBI-751210">
        <id>Q96EC8</id>
    </interactant>
    <interactant intactId="EBI-7797864">
        <id>P11912</id>
        <label>CD79A</label>
    </interactant>
    <organismsDiffer>false</organismsDiffer>
    <experiments>3</experiments>
</comment>
<comment type="interaction">
    <interactant intactId="EBI-751210">
        <id>Q96EC8</id>
    </interactant>
    <interactant intactId="EBI-2130213">
        <id>Q99675</id>
        <label>CGRRF1</label>
    </interactant>
    <organismsDiffer>false</organismsDiffer>
    <experiments>3</experiments>
</comment>
<comment type="interaction">
    <interactant intactId="EBI-751210">
        <id>Q96EC8</id>
    </interactant>
    <interactant intactId="EBI-1045797">
        <id>Q8N5K1</id>
        <label>CISD2</label>
    </interactant>
    <organismsDiffer>false</organismsDiffer>
    <experiments>3</experiments>
</comment>
<comment type="interaction">
    <interactant intactId="EBI-751210">
        <id>Q96EC8</id>
    </interactant>
    <interactant intactId="EBI-2835940">
        <id>P34972</id>
        <label>CNR2</label>
    </interactant>
    <organismsDiffer>false</organismsDiffer>
    <experiments>3</experiments>
</comment>
<comment type="interaction">
    <interactant intactId="EBI-751210">
        <id>Q96EC8</id>
    </interactant>
    <interactant intactId="EBI-18013275">
        <id>Q7Z7G2</id>
        <label>CPLX4</label>
    </interactant>
    <organismsDiffer>false</organismsDiffer>
    <experiments>3</experiments>
</comment>
<comment type="interaction">
    <interactant intactId="EBI-751210">
        <id>Q96EC8</id>
    </interactant>
    <interactant intactId="EBI-17233035">
        <id>Q9BUF7-2</id>
        <label>CRB3</label>
    </interactant>
    <organismsDiffer>false</organismsDiffer>
    <experiments>3</experiments>
</comment>
<comment type="interaction">
    <interactant intactId="EBI-751210">
        <id>Q96EC8</id>
    </interactant>
    <interactant intactId="EBI-6942903">
        <id>Q96BA8</id>
        <label>CREB3L1</label>
    </interactant>
    <organismsDiffer>false</organismsDiffer>
    <experiments>3</experiments>
</comment>
<comment type="interaction">
    <interactant intactId="EBI-751210">
        <id>Q96EC8</id>
    </interactant>
    <interactant intactId="EBI-852194">
        <id>Q68CJ9</id>
        <label>CREB3L3</label>
    </interactant>
    <organismsDiffer>false</organismsDiffer>
    <experiments>3</experiments>
</comment>
<comment type="interaction">
    <interactant intactId="EBI-751210">
        <id>Q96EC8</id>
    </interactant>
    <interactant intactId="EBI-12823659">
        <id>Q5JRM2</id>
        <label>CXorf66</label>
    </interactant>
    <organismsDiffer>false</organismsDiffer>
    <experiments>3</experiments>
</comment>
<comment type="interaction">
    <interactant intactId="EBI-751210">
        <id>Q96EC8</id>
    </interactant>
    <interactant intactId="EBI-3915253">
        <id>Q15125</id>
        <label>EBP</label>
    </interactant>
    <organismsDiffer>false</organismsDiffer>
    <experiments>3</experiments>
</comment>
<comment type="interaction">
    <interactant intactId="EBI-751210">
        <id>Q96EC8</id>
    </interactant>
    <interactant intactId="EBI-1753674">
        <id>P52803</id>
        <label>EFNA5</label>
    </interactant>
    <organismsDiffer>false</organismsDiffer>
    <experiments>3</experiments>
</comment>
<comment type="interaction">
    <interactant intactId="EBI-751210">
        <id>Q96EC8</id>
    </interactant>
    <interactant intactId="EBI-18535450">
        <id>Q9GZR5</id>
        <label>ELOVL4</label>
    </interactant>
    <organismsDiffer>false</organismsDiffer>
    <experiments>3</experiments>
</comment>
<comment type="interaction">
    <interactant intactId="EBI-751210">
        <id>Q96EC8</id>
    </interactant>
    <interactant intactId="EBI-781551">
        <id>Q9Y282</id>
        <label>ERGIC3</label>
    </interactant>
    <organismsDiffer>false</organismsDiffer>
    <experiments>3</experiments>
</comment>
<comment type="interaction">
    <interactant intactId="EBI-751210">
        <id>Q96EC8</id>
    </interactant>
    <interactant intactId="EBI-18304435">
        <id>Q5JX71</id>
        <label>FAM209A</label>
    </interactant>
    <organismsDiffer>false</organismsDiffer>
    <experiments>3</experiments>
</comment>
<comment type="interaction">
    <interactant intactId="EBI-751210">
        <id>Q96EC8</id>
    </interactant>
    <interactant intactId="EBI-2833872">
        <id>O15552</id>
        <label>FFAR2</label>
    </interactant>
    <organismsDiffer>false</organismsDiffer>
    <experiments>3</experiments>
</comment>
<comment type="interaction">
    <interactant intactId="EBI-751210">
        <id>Q96EC8</id>
    </interactant>
    <interactant intactId="EBI-3918971">
        <id>Q9Y680</id>
        <label>FKBP7</label>
    </interactant>
    <organismsDiffer>false</organismsDiffer>
    <experiments>3</experiments>
</comment>
<comment type="interaction">
    <interactant intactId="EBI-751210">
        <id>Q96EC8</id>
    </interactant>
    <interactant intactId="EBI-750433">
        <id>P36382</id>
        <label>GJA5</label>
    </interactant>
    <organismsDiffer>false</organismsDiffer>
    <experiments>3</experiments>
</comment>
<comment type="interaction">
    <interactant intactId="EBI-751210">
        <id>Q96EC8</id>
    </interactant>
    <interactant intactId="EBI-17458373">
        <id>P48165</id>
        <label>GJA8</label>
    </interactant>
    <organismsDiffer>false</organismsDiffer>
    <experiments>3</experiments>
</comment>
<comment type="interaction">
    <interactant intactId="EBI-751210">
        <id>Q96EC8</id>
    </interactant>
    <interactant intactId="EBI-17565645">
        <id>P08034</id>
        <label>GJB1</label>
    </interactant>
    <organismsDiffer>false</organismsDiffer>
    <experiments>3</experiments>
</comment>
<comment type="interaction">
    <interactant intactId="EBI-751210">
        <id>Q96EC8</id>
    </interactant>
    <interactant intactId="EBI-17935713">
        <id>Q96P66</id>
        <label>GPR101</label>
    </interactant>
    <organismsDiffer>false</organismsDiffer>
    <experiments>3</experiments>
</comment>
<comment type="interaction">
    <interactant intactId="EBI-751210">
        <id>Q96EC8</id>
    </interactant>
    <interactant intactId="EBI-13345167">
        <id>Q8TDT2</id>
        <label>GPR152</label>
    </interactant>
    <organismsDiffer>false</organismsDiffer>
    <experiments>3</experiments>
</comment>
<comment type="interaction">
    <interactant intactId="EBI-751210">
        <id>Q96EC8</id>
    </interactant>
    <interactant intactId="EBI-18076404">
        <id>O15529</id>
        <label>GPR42</label>
    </interactant>
    <organismsDiffer>false</organismsDiffer>
    <experiments>3</experiments>
</comment>
<comment type="interaction">
    <interactant intactId="EBI-751210">
        <id>Q96EC8</id>
    </interactant>
    <interactant intactId="EBI-11721746">
        <id>Q8TED1</id>
        <label>GPX8</label>
    </interactant>
    <organismsDiffer>false</organismsDiffer>
    <experiments>3</experiments>
</comment>
<comment type="interaction">
    <interactant intactId="EBI-751210">
        <id>Q96EC8</id>
    </interactant>
    <interactant intactId="EBI-1052304">
        <id>Q8NBQ5</id>
        <label>HSD17B11</label>
    </interactant>
    <organismsDiffer>false</organismsDiffer>
    <experiments>3</experiments>
</comment>
<comment type="interaction">
    <interactant intactId="EBI-751210">
        <id>Q96EC8</id>
    </interactant>
    <interactant intactId="EBI-1031656">
        <id>Q13651</id>
        <label>IL10RA</label>
    </interactant>
    <organismsDiffer>false</organismsDiffer>
    <experiments>3</experiments>
</comment>
<comment type="interaction">
    <interactant intactId="EBI-751210">
        <id>Q96EC8</id>
    </interactant>
    <interactant intactId="EBI-12838366">
        <id>Q01638-2</id>
        <label>IL1RL1</label>
    </interactant>
    <organismsDiffer>false</organismsDiffer>
    <experiments>3</experiments>
</comment>
<comment type="interaction">
    <interactant intactId="EBI-751210">
        <id>Q96EC8</id>
    </interactant>
    <interactant intactId="EBI-19045531">
        <id>Q6UWB1</id>
        <label>IL27RA</label>
    </interactant>
    <organismsDiffer>false</organismsDiffer>
    <experiments>3</experiments>
</comment>
<comment type="interaction">
    <interactant intactId="EBI-751210">
        <id>Q96EC8</id>
    </interactant>
    <interactant intactId="EBI-13310605">
        <id>Q9P055-4</id>
        <label>JKAMP</label>
    </interactant>
    <organismsDiffer>false</organismsDiffer>
    <experiments>3</experiments>
</comment>
<comment type="interaction">
    <interactant intactId="EBI-751210">
        <id>Q96EC8</id>
    </interactant>
    <interactant intactId="EBI-12017638">
        <id>P48051</id>
        <label>KCNJ6</label>
    </interactant>
    <organismsDiffer>false</organismsDiffer>
    <experiments>3</experiments>
</comment>
<comment type="interaction">
    <interactant intactId="EBI-751210">
        <id>Q96EC8</id>
    </interactant>
    <interactant intactId="EBI-3934936">
        <id>O95279</id>
        <label>KCNK5</label>
    </interactant>
    <organismsDiffer>false</organismsDiffer>
    <experiments>3</experiments>
</comment>
<comment type="interaction">
    <interactant intactId="EBI-751210">
        <id>Q96EC8</id>
    </interactant>
    <interactant intactId="EBI-11304917">
        <id>Q8N386</id>
        <label>LRRC25</label>
    </interactant>
    <organismsDiffer>false</organismsDiffer>
    <experiments>3</experiments>
</comment>
<comment type="interaction">
    <interactant intactId="EBI-751210">
        <id>Q96EC8</id>
    </interactant>
    <interactant intactId="EBI-17775622">
        <id>Q96PB8</id>
        <label>LRRC3B</label>
    </interactant>
    <organismsDiffer>false</organismsDiffer>
    <experiments>3</experiments>
</comment>
<comment type="interaction">
    <interactant intactId="EBI-751210">
        <id>Q96EC8</id>
    </interactant>
    <interactant intactId="EBI-3925442">
        <id>Q9HCJ2</id>
        <label>LRRC4C</label>
    </interactant>
    <organismsDiffer>false</organismsDiffer>
    <experiments>3</experiments>
</comment>
<comment type="interaction">
    <interactant intactId="EBI-751210">
        <id>Q96EC8</id>
    </interactant>
    <interactant intactId="EBI-9088345">
        <id>O95867</id>
        <label>LY6G6C</label>
    </interactant>
    <organismsDiffer>false</organismsDiffer>
    <experiments>3</experiments>
</comment>
<comment type="interaction">
    <interactant intactId="EBI-751210">
        <id>Q96EC8</id>
    </interactant>
    <interactant intactId="EBI-10329546">
        <id>Q9Y5Y7</id>
        <label>LYVE1</label>
    </interactant>
    <organismsDiffer>false</organismsDiffer>
    <experiments>3</experiments>
</comment>
<comment type="interaction">
    <interactant intactId="EBI-751210">
        <id>Q96EC8</id>
    </interactant>
    <interactant intactId="EBI-373355">
        <id>Q5SR56</id>
        <label>MFSD14B</label>
    </interactant>
    <organismsDiffer>false</organismsDiffer>
    <experiments>3</experiments>
</comment>
<comment type="interaction">
    <interactant intactId="EBI-751210">
        <id>Q96EC8</id>
    </interactant>
    <interactant intactId="EBI-3920969">
        <id>Q6N075</id>
        <label>MFSD5</label>
    </interactant>
    <organismsDiffer>false</organismsDiffer>
    <experiments>3</experiments>
</comment>
<comment type="interaction">
    <interactant intactId="EBI-751210">
        <id>Q96EC8</id>
    </interactant>
    <interactant intactId="EBI-17873222">
        <id>Q15546</id>
        <label>MMD</label>
    </interactant>
    <organismsDiffer>false</organismsDiffer>
    <experiments>3</experiments>
</comment>
<comment type="interaction">
    <interactant intactId="EBI-751210">
        <id>Q96EC8</id>
    </interactant>
    <interactant intactId="EBI-12806656">
        <id>Q96HJ5</id>
        <label>MS4A3</label>
    </interactant>
    <organismsDiffer>false</organismsDiffer>
    <experiments>3</experiments>
</comment>
<comment type="interaction">
    <interactant intactId="EBI-751210">
        <id>Q96EC8</id>
    </interactant>
    <interactant intactId="EBI-3923617">
        <id>Q9H2K0</id>
        <label>MTIF3</label>
    </interactant>
    <organismsDiffer>false</organismsDiffer>
    <experiments>3</experiments>
</comment>
<comment type="interaction">
    <interactant intactId="EBI-751210">
        <id>Q96EC8</id>
    </interactant>
    <interactant intactId="EBI-741874">
        <id>Q9Y375</id>
        <label>NDUFAF1</label>
    </interactant>
    <organismsDiffer>false</organismsDiffer>
    <experiments>3</experiments>
</comment>
<comment type="interaction">
    <interactant intactId="EBI-751210">
        <id>Q96EC8</id>
    </interactant>
    <interactant intactId="EBI-12382569">
        <id>Q2M2E3</id>
        <label>ODF4</label>
    </interactant>
    <organismsDiffer>false</organismsDiffer>
    <experiments>3</experiments>
</comment>
<comment type="interaction">
    <interactant intactId="EBI-751210">
        <id>Q96EC8</id>
    </interactant>
    <interactant intactId="EBI-716063">
        <id>Q13113</id>
        <label>PDZK1IP1</label>
    </interactant>
    <organismsDiffer>false</organismsDiffer>
    <experiments>3</experiments>
</comment>
<comment type="interaction">
    <interactant intactId="EBI-751210">
        <id>Q96EC8</id>
    </interactant>
    <interactant intactId="EBI-16364752">
        <id>Q5VY80</id>
        <label>RAET1L</label>
    </interactant>
    <organismsDiffer>false</organismsDiffer>
    <experiments>3</experiments>
</comment>
<comment type="interaction">
    <interactant intactId="EBI-751210">
        <id>Q96EC8</id>
    </interactant>
    <interactant intactId="EBI-10192441">
        <id>Q86VR2</id>
        <label>RETREG3</label>
    </interactant>
    <organismsDiffer>false</organismsDiffer>
    <experiments>5</experiments>
</comment>
<comment type="interaction">
    <interactant intactId="EBI-751210">
        <id>Q96EC8</id>
    </interactant>
    <interactant intactId="EBI-15853497">
        <id>Q9UBD6</id>
        <label>RHCG</label>
    </interactant>
    <organismsDiffer>false</organismsDiffer>
    <experiments>3</experiments>
</comment>
<comment type="interaction">
    <interactant intactId="EBI-751210">
        <id>Q96EC8</id>
    </interactant>
    <interactant intactId="EBI-2340249">
        <id>Q96GF1</id>
        <label>RNF185</label>
    </interactant>
    <organismsDiffer>false</organismsDiffer>
    <experiments>3</experiments>
</comment>
<comment type="interaction">
    <interactant intactId="EBI-751210">
        <id>Q96EC8</id>
    </interactant>
    <interactant intactId="EBI-3923031">
        <id>Q14973</id>
        <label>SLC10A1</label>
    </interactant>
    <organismsDiffer>false</organismsDiffer>
    <experiments>3</experiments>
</comment>
<comment type="interaction">
    <interactant intactId="EBI-751210">
        <id>Q96EC8</id>
    </interactant>
    <interactant intactId="EBI-18159983">
        <id>Q3KNW5</id>
        <label>SLC10A6</label>
    </interactant>
    <organismsDiffer>false</organismsDiffer>
    <experiments>3</experiments>
</comment>
<comment type="interaction">
    <interactant intactId="EBI-751210">
        <id>Q96EC8</id>
    </interactant>
    <interactant intactId="EBI-12854384">
        <id>Q9Y666-2</id>
        <label>SLC12A7</label>
    </interactant>
    <organismsDiffer>false</organismsDiffer>
    <experiments>3</experiments>
</comment>
<comment type="interaction">
    <interactant intactId="EBI-751210">
        <id>Q96EC8</id>
    </interactant>
    <interactant intactId="EBI-17249797">
        <id>Q8NDX2-2</id>
        <label>SLC17A8</label>
    </interactant>
    <organismsDiffer>false</organismsDiffer>
    <experiments>3</experiments>
</comment>
<comment type="interaction">
    <interactant intactId="EBI-751210">
        <id>Q96EC8</id>
    </interactant>
    <interactant intactId="EBI-17595455">
        <id>P54219-3</id>
        <label>SLC18A1</label>
    </interactant>
    <organismsDiffer>false</organismsDiffer>
    <experiments>3</experiments>
</comment>
<comment type="interaction">
    <interactant intactId="EBI-751210">
        <id>Q96EC8</id>
    </interactant>
    <interactant intactId="EBI-13918058">
        <id>O14863</id>
        <label>SLC30A4</label>
    </interactant>
    <organismsDiffer>false</organismsDiffer>
    <experiments>3</experiments>
</comment>
<comment type="interaction">
    <interactant intactId="EBI-751210">
        <id>Q96EC8</id>
    </interactant>
    <interactant intactId="EBI-10262251">
        <id>Q8IWU4</id>
        <label>SLC30A8</label>
    </interactant>
    <organismsDiffer>false</organismsDiffer>
    <experiments>3</experiments>
</comment>
<comment type="interaction">
    <interactant intactId="EBI-751210">
        <id>Q96EC8</id>
    </interactant>
    <interactant intactId="EBI-17295964">
        <id>Q9NQQ7-3</id>
        <label>SLC35C2</label>
    </interactant>
    <organismsDiffer>false</organismsDiffer>
    <experiments>3</experiments>
</comment>
<comment type="interaction">
    <interactant intactId="EBI-751210">
        <id>Q96EC8</id>
    </interactant>
    <interactant intactId="EBI-10314552">
        <id>Q9NVC3</id>
        <label>SLC38A7</label>
    </interactant>
    <organismsDiffer>false</organismsDiffer>
    <experiments>3</experiments>
</comment>
<comment type="interaction">
    <interactant intactId="EBI-751210">
        <id>Q96EC8</id>
    </interactant>
    <interactant intactId="EBI-726491">
        <id>Q9NY26</id>
        <label>SLC39A1</label>
    </interactant>
    <organismsDiffer>false</organismsDiffer>
    <experiments>3</experiments>
</comment>
<comment type="interaction">
    <interactant intactId="EBI-751210">
        <id>Q96EC8</id>
    </interactant>
    <interactant intactId="EBI-12898013">
        <id>Q9NP94</id>
        <label>SLC39A2</label>
    </interactant>
    <organismsDiffer>false</organismsDiffer>
    <experiments>3</experiments>
</comment>
<comment type="interaction">
    <interactant intactId="EBI-751210">
        <id>Q96EC8</id>
    </interactant>
    <interactant intactId="EBI-5235586">
        <id>Q8TBB6</id>
        <label>SLC7A14</label>
    </interactant>
    <organismsDiffer>false</organismsDiffer>
    <experiments>4</experiments>
</comment>
<comment type="interaction">
    <interactant intactId="EBI-751210">
        <id>Q96EC8</id>
    </interactant>
    <interactant intactId="EBI-13292283">
        <id>Q9UHI5</id>
        <label>SLC7A8</label>
    </interactant>
    <organismsDiffer>false</organismsDiffer>
    <experiments>3</experiments>
</comment>
<comment type="interaction">
    <interactant intactId="EBI-751210">
        <id>Q96EC8</id>
    </interactant>
    <interactant intactId="EBI-17280858">
        <id>Q8WWF3</id>
        <label>SSMEM1</label>
    </interactant>
    <organismsDiffer>false</organismsDiffer>
    <experiments>3</experiments>
</comment>
<comment type="interaction">
    <interactant intactId="EBI-751210">
        <id>Q96EC8</id>
    </interactant>
    <interactant intactId="EBI-1211440">
        <id>P27105</id>
        <label>STOM</label>
    </interactant>
    <organismsDiffer>false</organismsDiffer>
    <experiments>3</experiments>
</comment>
<comment type="interaction">
    <interactant intactId="EBI-751210">
        <id>Q96EC8</id>
    </interactant>
    <interactant intactId="EBI-6447595">
        <id>P57738</id>
        <label>TCTA</label>
    </interactant>
    <organismsDiffer>false</organismsDiffer>
    <experiments>3</experiments>
</comment>
<comment type="interaction">
    <interactant intactId="EBI-751210">
        <id>Q96EC8</id>
    </interactant>
    <interactant intactId="EBI-726691">
        <id>Q8WY91</id>
        <label>THAP4</label>
    </interactant>
    <organismsDiffer>false</organismsDiffer>
    <experiments>3</experiments>
</comment>
<comment type="interaction">
    <interactant intactId="EBI-751210">
        <id>Q96EC8</id>
    </interactant>
    <interactant intactId="EBI-2821497">
        <id>Q9BVX2</id>
        <label>TMEM106C</label>
    </interactant>
    <organismsDiffer>false</organismsDiffer>
    <experiments>3</experiments>
</comment>
<comment type="interaction">
    <interactant intactId="EBI-751210">
        <id>Q96EC8</id>
    </interactant>
    <interactant intactId="EBI-723946">
        <id>P17152</id>
        <label>TMEM11</label>
    </interactant>
    <organismsDiffer>false</organismsDiffer>
    <experiments>3</experiments>
</comment>
<comment type="interaction">
    <interactant intactId="EBI-751210">
        <id>Q96EC8</id>
    </interactant>
    <interactant intactId="EBI-19763514">
        <id>Q8N3G9</id>
        <label>TMEM130</label>
    </interactant>
    <organismsDiffer>false</organismsDiffer>
    <experiments>3</experiments>
</comment>
<comment type="interaction">
    <interactant intactId="EBI-751210">
        <id>Q96EC8</id>
    </interactant>
    <interactant intactId="EBI-8638294">
        <id>Q9NUH8</id>
        <label>TMEM14B</label>
    </interactant>
    <organismsDiffer>false</organismsDiffer>
    <experiments>3</experiments>
</comment>
<comment type="interaction">
    <interactant intactId="EBI-751210">
        <id>Q96EC8</id>
    </interactant>
    <interactant intactId="EBI-10982110">
        <id>Q96Q45-2</id>
        <label>TMEM237</label>
    </interactant>
    <organismsDiffer>false</organismsDiffer>
    <experiments>3</experiments>
</comment>
<comment type="interaction">
    <interactant intactId="EBI-751210">
        <id>Q96EC8</id>
    </interactant>
    <interactant intactId="EBI-12886878">
        <id>Q6P5X7-2</id>
        <label>TMEM71</label>
    </interactant>
    <organismsDiffer>false</organismsDiffer>
    <experiments>3</experiments>
</comment>
<comment type="interaction">
    <interactant intactId="EBI-751210">
        <id>Q96EC8</id>
    </interactant>
    <interactant intactId="EBI-6447886">
        <id>Q9Y320</id>
        <label>TMX2</label>
    </interactant>
    <organismsDiffer>false</organismsDiffer>
    <experiments>3</experiments>
</comment>
<comment type="interaction">
    <interactant intactId="EBI-751210">
        <id>Q96EC8</id>
    </interactant>
    <interactant intactId="EBI-18055230">
        <id>P34981</id>
        <label>TRHR</label>
    </interactant>
    <organismsDiffer>false</organismsDiffer>
    <experiments>3</experiments>
</comment>
<comment type="interaction">
    <interactant intactId="EBI-751210">
        <id>Q96EC8</id>
    </interactant>
    <interactant intactId="EBI-11988865">
        <id>A5PKU2</id>
        <label>TUSC5</label>
    </interactant>
    <organismsDiffer>false</organismsDiffer>
    <experiments>3</experiments>
</comment>
<comment type="interaction">
    <interactant intactId="EBI-751210">
        <id>Q96EC8</id>
    </interactant>
    <interactant intactId="EBI-11343401">
        <id>Q9NYZ1</id>
        <label>TVP23B</label>
    </interactant>
    <organismsDiffer>false</organismsDiffer>
    <experiments>6</experiments>
</comment>
<comment type="interaction">
    <interactant intactId="EBI-751210">
        <id>Q96EC8</id>
    </interactant>
    <interactant intactId="EBI-3919993">
        <id>Q9BZM5</id>
        <label>ULBP2</label>
    </interactant>
    <organismsDiffer>false</organismsDiffer>
    <experiments>3</experiments>
</comment>
<comment type="interaction">
    <interactant intactId="EBI-751210">
        <id>Q96EC8</id>
    </interactant>
    <interactant intactId="EBI-7850136">
        <id>Q9Y548</id>
        <label>YIPF1</label>
    </interactant>
    <organismsDiffer>false</organismsDiffer>
    <experiments>10</experiments>
</comment>
<comment type="interaction">
    <interactant intactId="EBI-751210">
        <id>Q96EC8</id>
    </interactant>
    <interactant intactId="EBI-751204">
        <id>Q9BWQ6</id>
        <label>YIPF2</label>
    </interactant>
    <organismsDiffer>false</organismsDiffer>
    <experiments>9</experiments>
</comment>
<comment type="subcellular location">
    <subcellularLocation>
        <location evidence="4">Golgi apparatus membrane</location>
        <topology evidence="7">Multi-pass membrane protein</topology>
    </subcellularLocation>
    <text evidence="4 5">Evenly distributed between cis- and trans-Golgi apparatus (PubMed:27999994). Mainly localizes within medial-/trans-Golgi and trans-Golgi network (TGN), while less so within cis-Golgi (PubMed:28286305).</text>
</comment>
<comment type="alternative products">
    <event type="alternative splicing"/>
    <isoform>
        <id>Q96EC8-1</id>
        <name>1</name>
        <sequence type="displayed"/>
    </isoform>
    <isoform>
        <id>Q96EC8-2</id>
        <name>2</name>
        <sequence type="described" ref="VSP_047121"/>
    </isoform>
</comment>
<comment type="similarity">
    <text evidence="7">Belongs to the YIP1 family.</text>
</comment>
<protein>
    <recommendedName>
        <fullName>Protein YIPF6</fullName>
    </recommendedName>
    <alternativeName>
        <fullName>YIP1 family member 6</fullName>
    </alternativeName>
</protein>
<name>YIPF6_HUMAN</name>
<proteinExistence type="evidence at protein level"/>
<evidence type="ECO:0000250" key="1">
    <source>
        <dbReference type="UniProtKB" id="Q4QQU5"/>
    </source>
</evidence>
<evidence type="ECO:0000255" key="2"/>
<evidence type="ECO:0000269" key="3">
    <source>
    </source>
</evidence>
<evidence type="ECO:0000269" key="4">
    <source>
    </source>
</evidence>
<evidence type="ECO:0000269" key="5">
    <source>
    </source>
</evidence>
<evidence type="ECO:0000303" key="6">
    <source>
    </source>
</evidence>
<evidence type="ECO:0000305" key="7"/>
<evidence type="ECO:0000305" key="8">
    <source>
    </source>
</evidence>
<evidence type="ECO:0007744" key="9">
    <source>
    </source>
</evidence>
<evidence type="ECO:0007744" key="10">
    <source>
    </source>
</evidence>
<sequence>MAEAEESPGDPGTASPRPLFAGLSDISISQDIPVEGEITIPMRSRIREFDSSTLNESVRNTIMRDLKAVGKKFMHVLYPRKSNTLLRDWDLWGPLILCVTLALMLQRDSADSEKDGGPQFAEVFVIVWFGAVTITLNSKLLGGNISFFQSLCVLGYCILPLTVAMLICRLVLLADPGPVNFMVRLFVVIVMFAWSIVASTAFLADSQPPNRRALAVYPVFLFYFVISWMILTFTPQ</sequence>
<dbReference type="EMBL" id="AK303992">
    <property type="protein sequence ID" value="BAG64909.1"/>
    <property type="molecule type" value="mRNA"/>
</dbReference>
<dbReference type="EMBL" id="AL928603">
    <property type="status" value="NOT_ANNOTATED_CDS"/>
    <property type="molecule type" value="Genomic_DNA"/>
</dbReference>
<dbReference type="EMBL" id="AL672138">
    <property type="status" value="NOT_ANNOTATED_CDS"/>
    <property type="molecule type" value="Genomic_DNA"/>
</dbReference>
<dbReference type="EMBL" id="CH471132">
    <property type="protein sequence ID" value="EAX05376.1"/>
    <property type="molecule type" value="Genomic_DNA"/>
</dbReference>
<dbReference type="EMBL" id="BC012469">
    <property type="protein sequence ID" value="AAH12469.1"/>
    <property type="molecule type" value="mRNA"/>
</dbReference>
<dbReference type="CCDS" id="CCDS14389.1">
    <molecule id="Q96EC8-1"/>
</dbReference>
<dbReference type="CCDS" id="CCDS56604.1">
    <molecule id="Q96EC8-2"/>
</dbReference>
<dbReference type="RefSeq" id="NP_001182143.1">
    <molecule id="Q96EC8-2"/>
    <property type="nucleotide sequence ID" value="NM_001195214.2"/>
</dbReference>
<dbReference type="RefSeq" id="NP_776195.2">
    <molecule id="Q96EC8-1"/>
    <property type="nucleotide sequence ID" value="NM_173834.4"/>
</dbReference>
<dbReference type="BioGRID" id="130382">
    <property type="interactions" value="120"/>
</dbReference>
<dbReference type="FunCoup" id="Q96EC8">
    <property type="interactions" value="2020"/>
</dbReference>
<dbReference type="IntAct" id="Q96EC8">
    <property type="interactions" value="107"/>
</dbReference>
<dbReference type="MINT" id="Q96EC8"/>
<dbReference type="STRING" id="9606.ENSP00000417573"/>
<dbReference type="GlyGen" id="Q96EC8">
    <property type="glycosylation" value="1 site, 1 O-linked glycan (1 site)"/>
</dbReference>
<dbReference type="iPTMnet" id="Q96EC8"/>
<dbReference type="PhosphoSitePlus" id="Q96EC8"/>
<dbReference type="SwissPalm" id="Q96EC8"/>
<dbReference type="BioMuta" id="YIPF6"/>
<dbReference type="DMDM" id="109896316"/>
<dbReference type="jPOST" id="Q96EC8"/>
<dbReference type="MassIVE" id="Q96EC8"/>
<dbReference type="PaxDb" id="9606-ENSP00000417573"/>
<dbReference type="PeptideAtlas" id="Q96EC8"/>
<dbReference type="ProteomicsDB" id="33874"/>
<dbReference type="ProteomicsDB" id="76395">
    <molecule id="Q96EC8-1"/>
</dbReference>
<dbReference type="Pumba" id="Q96EC8"/>
<dbReference type="Antibodypedia" id="554">
    <property type="antibodies" value="50 antibodies from 14 providers"/>
</dbReference>
<dbReference type="DNASU" id="286451"/>
<dbReference type="Ensembl" id="ENST00000374622.3">
    <molecule id="Q96EC8-2"/>
    <property type="protein sequence ID" value="ENSP00000363751.2"/>
    <property type="gene ID" value="ENSG00000181704.12"/>
</dbReference>
<dbReference type="Ensembl" id="ENST00000462683.6">
    <molecule id="Q96EC8-1"/>
    <property type="protein sequence ID" value="ENSP00000417573.1"/>
    <property type="gene ID" value="ENSG00000181704.12"/>
</dbReference>
<dbReference type="GeneID" id="286451"/>
<dbReference type="KEGG" id="hsa:286451"/>
<dbReference type="MANE-Select" id="ENST00000462683.6">
    <property type="protein sequence ID" value="ENSP00000417573.1"/>
    <property type="RefSeq nucleotide sequence ID" value="NM_173834.4"/>
    <property type="RefSeq protein sequence ID" value="NP_776195.2"/>
</dbReference>
<dbReference type="UCSC" id="uc004dwz.4">
    <molecule id="Q96EC8-1"/>
    <property type="organism name" value="human"/>
</dbReference>
<dbReference type="AGR" id="HGNC:28304"/>
<dbReference type="CTD" id="286451"/>
<dbReference type="DisGeNET" id="286451"/>
<dbReference type="GeneCards" id="YIPF6"/>
<dbReference type="HGNC" id="HGNC:28304">
    <property type="gene designation" value="YIPF6"/>
</dbReference>
<dbReference type="HPA" id="ENSG00000181704">
    <property type="expression patterns" value="Low tissue specificity"/>
</dbReference>
<dbReference type="MIM" id="300996">
    <property type="type" value="gene"/>
</dbReference>
<dbReference type="neXtProt" id="NX_Q96EC8"/>
<dbReference type="OpenTargets" id="ENSG00000181704"/>
<dbReference type="PharmGKB" id="PA142670549"/>
<dbReference type="VEuPathDB" id="HostDB:ENSG00000181704"/>
<dbReference type="eggNOG" id="KOG2946">
    <property type="taxonomic scope" value="Eukaryota"/>
</dbReference>
<dbReference type="GeneTree" id="ENSGT00940000153168"/>
<dbReference type="HOGENOM" id="CLU_059592_3_0_1"/>
<dbReference type="InParanoid" id="Q96EC8"/>
<dbReference type="OMA" id="VMAMFGW"/>
<dbReference type="OrthoDB" id="411251at2759"/>
<dbReference type="PAN-GO" id="Q96EC8">
    <property type="GO annotations" value="1 GO annotation based on evolutionary models"/>
</dbReference>
<dbReference type="PhylomeDB" id="Q96EC8"/>
<dbReference type="TreeFam" id="TF314563"/>
<dbReference type="PathwayCommons" id="Q96EC8"/>
<dbReference type="Reactome" id="R-HSA-432722">
    <property type="pathway name" value="Golgi Associated Vesicle Biogenesis"/>
</dbReference>
<dbReference type="SignaLink" id="Q96EC8"/>
<dbReference type="BioGRID-ORCS" id="286451">
    <property type="hits" value="19 hits in 780 CRISPR screens"/>
</dbReference>
<dbReference type="ChiTaRS" id="YIPF6">
    <property type="organism name" value="human"/>
</dbReference>
<dbReference type="GeneWiki" id="YIPF6"/>
<dbReference type="GenomeRNAi" id="286451"/>
<dbReference type="Pharos" id="Q96EC8">
    <property type="development level" value="Tdark"/>
</dbReference>
<dbReference type="PRO" id="PR:Q96EC8"/>
<dbReference type="Proteomes" id="UP000005640">
    <property type="component" value="Chromosome X"/>
</dbReference>
<dbReference type="RNAct" id="Q96EC8">
    <property type="molecule type" value="protein"/>
</dbReference>
<dbReference type="Bgee" id="ENSG00000181704">
    <property type="expression patterns" value="Expressed in secondary oocyte and 219 other cell types or tissues"/>
</dbReference>
<dbReference type="ExpressionAtlas" id="Q96EC8">
    <property type="expression patterns" value="baseline and differential"/>
</dbReference>
<dbReference type="GO" id="GO:0005801">
    <property type="term" value="C:cis-Golgi network"/>
    <property type="evidence" value="ECO:0007669"/>
    <property type="project" value="Ensembl"/>
</dbReference>
<dbReference type="GO" id="GO:0030134">
    <property type="term" value="C:COPII-coated ER to Golgi transport vesicle"/>
    <property type="evidence" value="ECO:0007669"/>
    <property type="project" value="Ensembl"/>
</dbReference>
<dbReference type="GO" id="GO:0005783">
    <property type="term" value="C:endoplasmic reticulum"/>
    <property type="evidence" value="ECO:0000314"/>
    <property type="project" value="LIFEdb"/>
</dbReference>
<dbReference type="GO" id="GO:0005797">
    <property type="term" value="C:Golgi medial cisterna"/>
    <property type="evidence" value="ECO:0000314"/>
    <property type="project" value="UniProtKB"/>
</dbReference>
<dbReference type="GO" id="GO:0000139">
    <property type="term" value="C:Golgi membrane"/>
    <property type="evidence" value="ECO:0007669"/>
    <property type="project" value="UniProtKB-SubCell"/>
</dbReference>
<dbReference type="GO" id="GO:0000138">
    <property type="term" value="C:Golgi trans cisterna"/>
    <property type="evidence" value="ECO:0000314"/>
    <property type="project" value="UniProtKB"/>
</dbReference>
<dbReference type="GO" id="GO:0005802">
    <property type="term" value="C:trans-Golgi network"/>
    <property type="evidence" value="ECO:0000314"/>
    <property type="project" value="UniProtKB"/>
</dbReference>
<dbReference type="GO" id="GO:0042802">
    <property type="term" value="F:identical protein binding"/>
    <property type="evidence" value="ECO:0007669"/>
    <property type="project" value="Ensembl"/>
</dbReference>
<dbReference type="GO" id="GO:0006888">
    <property type="term" value="P:endoplasmic reticulum to Golgi vesicle-mediated transport"/>
    <property type="evidence" value="ECO:0007669"/>
    <property type="project" value="InterPro"/>
</dbReference>
<dbReference type="GO" id="GO:0060576">
    <property type="term" value="P:intestinal epithelial cell development"/>
    <property type="evidence" value="ECO:0007669"/>
    <property type="project" value="Ensembl"/>
</dbReference>
<dbReference type="InterPro" id="IPR045231">
    <property type="entry name" value="Yip1/4-like"/>
</dbReference>
<dbReference type="InterPro" id="IPR006977">
    <property type="entry name" value="Yip1_dom"/>
</dbReference>
<dbReference type="PANTHER" id="PTHR21236">
    <property type="entry name" value="GOLGI MEMBRANE PROTEIN YIP1"/>
    <property type="match status" value="1"/>
</dbReference>
<dbReference type="PANTHER" id="PTHR21236:SF1">
    <property type="entry name" value="PROTEIN YIPF6"/>
    <property type="match status" value="1"/>
</dbReference>
<dbReference type="Pfam" id="PF04893">
    <property type="entry name" value="Yip1"/>
    <property type="match status" value="1"/>
</dbReference>
<accession>Q96EC8</accession>
<accession>B4E1U7</accession>
<accession>G5E997</accession>
<accession>Q5JP08</accession>
<organism>
    <name type="scientific">Homo sapiens</name>
    <name type="common">Human</name>
    <dbReference type="NCBI Taxonomy" id="9606"/>
    <lineage>
        <taxon>Eukaryota</taxon>
        <taxon>Metazoa</taxon>
        <taxon>Chordata</taxon>
        <taxon>Craniata</taxon>
        <taxon>Vertebrata</taxon>
        <taxon>Euteleostomi</taxon>
        <taxon>Mammalia</taxon>
        <taxon>Eutheria</taxon>
        <taxon>Euarchontoglires</taxon>
        <taxon>Primates</taxon>
        <taxon>Haplorrhini</taxon>
        <taxon>Catarrhini</taxon>
        <taxon>Hominidae</taxon>
        <taxon>Homo</taxon>
    </lineage>
</organism>
<feature type="initiator methionine" description="Removed" evidence="9 10">
    <location>
        <position position="1"/>
    </location>
</feature>
<feature type="chain" id="PRO_0000242668" description="Protein YIPF6">
    <location>
        <begin position="2"/>
        <end position="236"/>
    </location>
</feature>
<feature type="topological domain" description="Cytoplasmic" evidence="8">
    <location>
        <begin position="2"/>
        <end position="84"/>
    </location>
</feature>
<feature type="transmembrane region" description="Helical" evidence="2">
    <location>
        <begin position="85"/>
        <end position="105"/>
    </location>
</feature>
<feature type="topological domain" description="Lumenal" evidence="7">
    <location>
        <begin position="106"/>
        <end position="115"/>
    </location>
</feature>
<feature type="transmembrane region" description="Helical" evidence="2">
    <location>
        <begin position="116"/>
        <end position="136"/>
    </location>
</feature>
<feature type="topological domain" description="Cytoplasmic" evidence="7">
    <location>
        <begin position="137"/>
        <end position="146"/>
    </location>
</feature>
<feature type="transmembrane region" description="Helical" evidence="2">
    <location>
        <begin position="147"/>
        <end position="167"/>
    </location>
</feature>
<feature type="topological domain" description="Lumenal" evidence="7">
    <location>
        <begin position="168"/>
        <end position="184"/>
    </location>
</feature>
<feature type="transmembrane region" description="Helical" evidence="2">
    <location>
        <begin position="185"/>
        <end position="205"/>
    </location>
</feature>
<feature type="topological domain" description="Cytoplasmic" evidence="7">
    <location>
        <begin position="206"/>
        <end position="212"/>
    </location>
</feature>
<feature type="transmembrane region" description="Helical" evidence="2">
    <location>
        <begin position="213"/>
        <end position="233"/>
    </location>
</feature>
<feature type="topological domain" description="Lumenal" evidence="8">
    <location>
        <begin position="234"/>
        <end position="236"/>
    </location>
</feature>
<feature type="modified residue" description="N-acetylalanine" evidence="9 10">
    <location>
        <position position="2"/>
    </location>
</feature>
<feature type="modified residue" description="Phosphoserine" evidence="1">
    <location>
        <position position="7"/>
    </location>
</feature>
<feature type="splice variant" id="VSP_047121" description="In isoform 2." evidence="6">
    <location>
        <begin position="20"/>
        <end position="62"/>
    </location>
</feature>
<feature type="sequence variant" id="VAR_026855" description="In dbSNP:rs17850921." evidence="3">
    <original>F</original>
    <variation>L</variation>
    <location>
        <position position="202"/>
    </location>
</feature>
<feature type="sequence conflict" description="In Ref. 1; BAG64909." evidence="7" ref="1">
    <original>L</original>
    <variation>S</variation>
    <location>
        <position position="95"/>
    </location>
</feature>
<reference key="1">
    <citation type="journal article" date="2004" name="Nat. Genet.">
        <title>Complete sequencing and characterization of 21,243 full-length human cDNAs.</title>
        <authorList>
            <person name="Ota T."/>
            <person name="Suzuki Y."/>
            <person name="Nishikawa T."/>
            <person name="Otsuki T."/>
            <person name="Sugiyama T."/>
            <person name="Irie R."/>
            <person name="Wakamatsu A."/>
            <person name="Hayashi K."/>
            <person name="Sato H."/>
            <person name="Nagai K."/>
            <person name="Kimura K."/>
            <person name="Makita H."/>
            <person name="Sekine M."/>
            <person name="Obayashi M."/>
            <person name="Nishi T."/>
            <person name="Shibahara T."/>
            <person name="Tanaka T."/>
            <person name="Ishii S."/>
            <person name="Yamamoto J."/>
            <person name="Saito K."/>
            <person name="Kawai Y."/>
            <person name="Isono Y."/>
            <person name="Nakamura Y."/>
            <person name="Nagahari K."/>
            <person name="Murakami K."/>
            <person name="Yasuda T."/>
            <person name="Iwayanagi T."/>
            <person name="Wagatsuma M."/>
            <person name="Shiratori A."/>
            <person name="Sudo H."/>
            <person name="Hosoiri T."/>
            <person name="Kaku Y."/>
            <person name="Kodaira H."/>
            <person name="Kondo H."/>
            <person name="Sugawara M."/>
            <person name="Takahashi M."/>
            <person name="Kanda K."/>
            <person name="Yokoi T."/>
            <person name="Furuya T."/>
            <person name="Kikkawa E."/>
            <person name="Omura Y."/>
            <person name="Abe K."/>
            <person name="Kamihara K."/>
            <person name="Katsuta N."/>
            <person name="Sato K."/>
            <person name="Tanikawa M."/>
            <person name="Yamazaki M."/>
            <person name="Ninomiya K."/>
            <person name="Ishibashi T."/>
            <person name="Yamashita H."/>
            <person name="Murakawa K."/>
            <person name="Fujimori K."/>
            <person name="Tanai H."/>
            <person name="Kimata M."/>
            <person name="Watanabe M."/>
            <person name="Hiraoka S."/>
            <person name="Chiba Y."/>
            <person name="Ishida S."/>
            <person name="Ono Y."/>
            <person name="Takiguchi S."/>
            <person name="Watanabe S."/>
            <person name="Yosida M."/>
            <person name="Hotuta T."/>
            <person name="Kusano J."/>
            <person name="Kanehori K."/>
            <person name="Takahashi-Fujii A."/>
            <person name="Hara H."/>
            <person name="Tanase T.-O."/>
            <person name="Nomura Y."/>
            <person name="Togiya S."/>
            <person name="Komai F."/>
            <person name="Hara R."/>
            <person name="Takeuchi K."/>
            <person name="Arita M."/>
            <person name="Imose N."/>
            <person name="Musashino K."/>
            <person name="Yuuki H."/>
            <person name="Oshima A."/>
            <person name="Sasaki N."/>
            <person name="Aotsuka S."/>
            <person name="Yoshikawa Y."/>
            <person name="Matsunawa H."/>
            <person name="Ichihara T."/>
            <person name="Shiohata N."/>
            <person name="Sano S."/>
            <person name="Moriya S."/>
            <person name="Momiyama H."/>
            <person name="Satoh N."/>
            <person name="Takami S."/>
            <person name="Terashima Y."/>
            <person name="Suzuki O."/>
            <person name="Nakagawa S."/>
            <person name="Senoh A."/>
            <person name="Mizoguchi H."/>
            <person name="Goto Y."/>
            <person name="Shimizu F."/>
            <person name="Wakebe H."/>
            <person name="Hishigaki H."/>
            <person name="Watanabe T."/>
            <person name="Sugiyama A."/>
            <person name="Takemoto M."/>
            <person name="Kawakami B."/>
            <person name="Yamazaki M."/>
            <person name="Watanabe K."/>
            <person name="Kumagai A."/>
            <person name="Itakura S."/>
            <person name="Fukuzumi Y."/>
            <person name="Fujimori Y."/>
            <person name="Komiyama M."/>
            <person name="Tashiro H."/>
            <person name="Tanigami A."/>
            <person name="Fujiwara T."/>
            <person name="Ono T."/>
            <person name="Yamada K."/>
            <person name="Fujii Y."/>
            <person name="Ozaki K."/>
            <person name="Hirao M."/>
            <person name="Ohmori Y."/>
            <person name="Kawabata A."/>
            <person name="Hikiji T."/>
            <person name="Kobatake N."/>
            <person name="Inagaki H."/>
            <person name="Ikema Y."/>
            <person name="Okamoto S."/>
            <person name="Okitani R."/>
            <person name="Kawakami T."/>
            <person name="Noguchi S."/>
            <person name="Itoh T."/>
            <person name="Shigeta K."/>
            <person name="Senba T."/>
            <person name="Matsumura K."/>
            <person name="Nakajima Y."/>
            <person name="Mizuno T."/>
            <person name="Morinaga M."/>
            <person name="Sasaki M."/>
            <person name="Togashi T."/>
            <person name="Oyama M."/>
            <person name="Hata H."/>
            <person name="Watanabe M."/>
            <person name="Komatsu T."/>
            <person name="Mizushima-Sugano J."/>
            <person name="Satoh T."/>
            <person name="Shirai Y."/>
            <person name="Takahashi Y."/>
            <person name="Nakagawa K."/>
            <person name="Okumura K."/>
            <person name="Nagase T."/>
            <person name="Nomura N."/>
            <person name="Kikuchi H."/>
            <person name="Masuho Y."/>
            <person name="Yamashita R."/>
            <person name="Nakai K."/>
            <person name="Yada T."/>
            <person name="Nakamura Y."/>
            <person name="Ohara O."/>
            <person name="Isogai T."/>
            <person name="Sugano S."/>
        </authorList>
    </citation>
    <scope>NUCLEOTIDE SEQUENCE [LARGE SCALE MRNA] (ISOFORM 2)</scope>
    <source>
        <tissue>Trachea</tissue>
    </source>
</reference>
<reference key="2">
    <citation type="journal article" date="2005" name="Nature">
        <title>The DNA sequence of the human X chromosome.</title>
        <authorList>
            <person name="Ross M.T."/>
            <person name="Grafham D.V."/>
            <person name="Coffey A.J."/>
            <person name="Scherer S."/>
            <person name="McLay K."/>
            <person name="Muzny D."/>
            <person name="Platzer M."/>
            <person name="Howell G.R."/>
            <person name="Burrows C."/>
            <person name="Bird C.P."/>
            <person name="Frankish A."/>
            <person name="Lovell F.L."/>
            <person name="Howe K.L."/>
            <person name="Ashurst J.L."/>
            <person name="Fulton R.S."/>
            <person name="Sudbrak R."/>
            <person name="Wen G."/>
            <person name="Jones M.C."/>
            <person name="Hurles M.E."/>
            <person name="Andrews T.D."/>
            <person name="Scott C.E."/>
            <person name="Searle S."/>
            <person name="Ramser J."/>
            <person name="Whittaker A."/>
            <person name="Deadman R."/>
            <person name="Carter N.P."/>
            <person name="Hunt S.E."/>
            <person name="Chen R."/>
            <person name="Cree A."/>
            <person name="Gunaratne P."/>
            <person name="Havlak P."/>
            <person name="Hodgson A."/>
            <person name="Metzker M.L."/>
            <person name="Richards S."/>
            <person name="Scott G."/>
            <person name="Steffen D."/>
            <person name="Sodergren E."/>
            <person name="Wheeler D.A."/>
            <person name="Worley K.C."/>
            <person name="Ainscough R."/>
            <person name="Ambrose K.D."/>
            <person name="Ansari-Lari M.A."/>
            <person name="Aradhya S."/>
            <person name="Ashwell R.I."/>
            <person name="Babbage A.K."/>
            <person name="Bagguley C.L."/>
            <person name="Ballabio A."/>
            <person name="Banerjee R."/>
            <person name="Barker G.E."/>
            <person name="Barlow K.F."/>
            <person name="Barrett I.P."/>
            <person name="Bates K.N."/>
            <person name="Beare D.M."/>
            <person name="Beasley H."/>
            <person name="Beasley O."/>
            <person name="Beck A."/>
            <person name="Bethel G."/>
            <person name="Blechschmidt K."/>
            <person name="Brady N."/>
            <person name="Bray-Allen S."/>
            <person name="Bridgeman A.M."/>
            <person name="Brown A.J."/>
            <person name="Brown M.J."/>
            <person name="Bonnin D."/>
            <person name="Bruford E.A."/>
            <person name="Buhay C."/>
            <person name="Burch P."/>
            <person name="Burford D."/>
            <person name="Burgess J."/>
            <person name="Burrill W."/>
            <person name="Burton J."/>
            <person name="Bye J.M."/>
            <person name="Carder C."/>
            <person name="Carrel L."/>
            <person name="Chako J."/>
            <person name="Chapman J.C."/>
            <person name="Chavez D."/>
            <person name="Chen E."/>
            <person name="Chen G."/>
            <person name="Chen Y."/>
            <person name="Chen Z."/>
            <person name="Chinault C."/>
            <person name="Ciccodicola A."/>
            <person name="Clark S.Y."/>
            <person name="Clarke G."/>
            <person name="Clee C.M."/>
            <person name="Clegg S."/>
            <person name="Clerc-Blankenburg K."/>
            <person name="Clifford K."/>
            <person name="Cobley V."/>
            <person name="Cole C.G."/>
            <person name="Conquer J.S."/>
            <person name="Corby N."/>
            <person name="Connor R.E."/>
            <person name="David R."/>
            <person name="Davies J."/>
            <person name="Davis C."/>
            <person name="Davis J."/>
            <person name="Delgado O."/>
            <person name="Deshazo D."/>
            <person name="Dhami P."/>
            <person name="Ding Y."/>
            <person name="Dinh H."/>
            <person name="Dodsworth S."/>
            <person name="Draper H."/>
            <person name="Dugan-Rocha S."/>
            <person name="Dunham A."/>
            <person name="Dunn M."/>
            <person name="Durbin K.J."/>
            <person name="Dutta I."/>
            <person name="Eades T."/>
            <person name="Ellwood M."/>
            <person name="Emery-Cohen A."/>
            <person name="Errington H."/>
            <person name="Evans K.L."/>
            <person name="Faulkner L."/>
            <person name="Francis F."/>
            <person name="Frankland J."/>
            <person name="Fraser A.E."/>
            <person name="Galgoczy P."/>
            <person name="Gilbert J."/>
            <person name="Gill R."/>
            <person name="Gloeckner G."/>
            <person name="Gregory S.G."/>
            <person name="Gribble S."/>
            <person name="Griffiths C."/>
            <person name="Grocock R."/>
            <person name="Gu Y."/>
            <person name="Gwilliam R."/>
            <person name="Hamilton C."/>
            <person name="Hart E.A."/>
            <person name="Hawes A."/>
            <person name="Heath P.D."/>
            <person name="Heitmann K."/>
            <person name="Hennig S."/>
            <person name="Hernandez J."/>
            <person name="Hinzmann B."/>
            <person name="Ho S."/>
            <person name="Hoffs M."/>
            <person name="Howden P.J."/>
            <person name="Huckle E.J."/>
            <person name="Hume J."/>
            <person name="Hunt P.J."/>
            <person name="Hunt A.R."/>
            <person name="Isherwood J."/>
            <person name="Jacob L."/>
            <person name="Johnson D."/>
            <person name="Jones S."/>
            <person name="de Jong P.J."/>
            <person name="Joseph S.S."/>
            <person name="Keenan S."/>
            <person name="Kelly S."/>
            <person name="Kershaw J.K."/>
            <person name="Khan Z."/>
            <person name="Kioschis P."/>
            <person name="Klages S."/>
            <person name="Knights A.J."/>
            <person name="Kosiura A."/>
            <person name="Kovar-Smith C."/>
            <person name="Laird G.K."/>
            <person name="Langford C."/>
            <person name="Lawlor S."/>
            <person name="Leversha M."/>
            <person name="Lewis L."/>
            <person name="Liu W."/>
            <person name="Lloyd C."/>
            <person name="Lloyd D.M."/>
            <person name="Loulseged H."/>
            <person name="Loveland J.E."/>
            <person name="Lovell J.D."/>
            <person name="Lozado R."/>
            <person name="Lu J."/>
            <person name="Lyne R."/>
            <person name="Ma J."/>
            <person name="Maheshwari M."/>
            <person name="Matthews L.H."/>
            <person name="McDowall J."/>
            <person name="McLaren S."/>
            <person name="McMurray A."/>
            <person name="Meidl P."/>
            <person name="Meitinger T."/>
            <person name="Milne S."/>
            <person name="Miner G."/>
            <person name="Mistry S.L."/>
            <person name="Morgan M."/>
            <person name="Morris S."/>
            <person name="Mueller I."/>
            <person name="Mullikin J.C."/>
            <person name="Nguyen N."/>
            <person name="Nordsiek G."/>
            <person name="Nyakatura G."/>
            <person name="O'dell C.N."/>
            <person name="Okwuonu G."/>
            <person name="Palmer S."/>
            <person name="Pandian R."/>
            <person name="Parker D."/>
            <person name="Parrish J."/>
            <person name="Pasternak S."/>
            <person name="Patel D."/>
            <person name="Pearce A.V."/>
            <person name="Pearson D.M."/>
            <person name="Pelan S.E."/>
            <person name="Perez L."/>
            <person name="Porter K.M."/>
            <person name="Ramsey Y."/>
            <person name="Reichwald K."/>
            <person name="Rhodes S."/>
            <person name="Ridler K.A."/>
            <person name="Schlessinger D."/>
            <person name="Schueler M.G."/>
            <person name="Sehra H.K."/>
            <person name="Shaw-Smith C."/>
            <person name="Shen H."/>
            <person name="Sheridan E.M."/>
            <person name="Shownkeen R."/>
            <person name="Skuce C.D."/>
            <person name="Smith M.L."/>
            <person name="Sotheran E.C."/>
            <person name="Steingruber H.E."/>
            <person name="Steward C.A."/>
            <person name="Storey R."/>
            <person name="Swann R.M."/>
            <person name="Swarbreck D."/>
            <person name="Tabor P.E."/>
            <person name="Taudien S."/>
            <person name="Taylor T."/>
            <person name="Teague B."/>
            <person name="Thomas K."/>
            <person name="Thorpe A."/>
            <person name="Timms K."/>
            <person name="Tracey A."/>
            <person name="Trevanion S."/>
            <person name="Tromans A.C."/>
            <person name="d'Urso M."/>
            <person name="Verduzco D."/>
            <person name="Villasana D."/>
            <person name="Waldron L."/>
            <person name="Wall M."/>
            <person name="Wang Q."/>
            <person name="Warren J."/>
            <person name="Warry G.L."/>
            <person name="Wei X."/>
            <person name="West A."/>
            <person name="Whitehead S.L."/>
            <person name="Whiteley M.N."/>
            <person name="Wilkinson J.E."/>
            <person name="Willey D.L."/>
            <person name="Williams G."/>
            <person name="Williams L."/>
            <person name="Williamson A."/>
            <person name="Williamson H."/>
            <person name="Wilming L."/>
            <person name="Woodmansey R.L."/>
            <person name="Wray P.W."/>
            <person name="Yen J."/>
            <person name="Zhang J."/>
            <person name="Zhou J."/>
            <person name="Zoghbi H."/>
            <person name="Zorilla S."/>
            <person name="Buck D."/>
            <person name="Reinhardt R."/>
            <person name="Poustka A."/>
            <person name="Rosenthal A."/>
            <person name="Lehrach H."/>
            <person name="Meindl A."/>
            <person name="Minx P.J."/>
            <person name="Hillier L.W."/>
            <person name="Willard H.F."/>
            <person name="Wilson R.K."/>
            <person name="Waterston R.H."/>
            <person name="Rice C.M."/>
            <person name="Vaudin M."/>
            <person name="Coulson A."/>
            <person name="Nelson D.L."/>
            <person name="Weinstock G."/>
            <person name="Sulston J.E."/>
            <person name="Durbin R.M."/>
            <person name="Hubbard T."/>
            <person name="Gibbs R.A."/>
            <person name="Beck S."/>
            <person name="Rogers J."/>
            <person name="Bentley D.R."/>
        </authorList>
    </citation>
    <scope>NUCLEOTIDE SEQUENCE [LARGE SCALE GENOMIC DNA]</scope>
</reference>
<reference key="3">
    <citation type="submission" date="2005-07" db="EMBL/GenBank/DDBJ databases">
        <authorList>
            <person name="Mural R.J."/>
            <person name="Istrail S."/>
            <person name="Sutton G.G."/>
            <person name="Florea L."/>
            <person name="Halpern A.L."/>
            <person name="Mobarry C.M."/>
            <person name="Lippert R."/>
            <person name="Walenz B."/>
            <person name="Shatkay H."/>
            <person name="Dew I."/>
            <person name="Miller J.R."/>
            <person name="Flanigan M.J."/>
            <person name="Edwards N.J."/>
            <person name="Bolanos R."/>
            <person name="Fasulo D."/>
            <person name="Halldorsson B.V."/>
            <person name="Hannenhalli S."/>
            <person name="Turner R."/>
            <person name="Yooseph S."/>
            <person name="Lu F."/>
            <person name="Nusskern D.R."/>
            <person name="Shue B.C."/>
            <person name="Zheng X.H."/>
            <person name="Zhong F."/>
            <person name="Delcher A.L."/>
            <person name="Huson D.H."/>
            <person name="Kravitz S.A."/>
            <person name="Mouchard L."/>
            <person name="Reinert K."/>
            <person name="Remington K.A."/>
            <person name="Clark A.G."/>
            <person name="Waterman M.S."/>
            <person name="Eichler E.E."/>
            <person name="Adams M.D."/>
            <person name="Hunkapiller M.W."/>
            <person name="Myers E.W."/>
            <person name="Venter J.C."/>
        </authorList>
    </citation>
    <scope>NUCLEOTIDE SEQUENCE [LARGE SCALE GENOMIC DNA]</scope>
</reference>
<reference key="4">
    <citation type="journal article" date="2004" name="Genome Res.">
        <title>The status, quality, and expansion of the NIH full-length cDNA project: the Mammalian Gene Collection (MGC).</title>
        <authorList>
            <consortium name="The MGC Project Team"/>
        </authorList>
    </citation>
    <scope>NUCLEOTIDE SEQUENCE [LARGE SCALE MRNA] (ISOFORM 1)</scope>
    <scope>VARIANT LEU-202</scope>
    <source>
        <tissue>Kidney</tissue>
    </source>
</reference>
<reference key="5">
    <citation type="journal article" date="2012" name="Mol. Cell. Proteomics">
        <title>Comparative large-scale characterisation of plant vs. mammal proteins reveals similar and idiosyncratic N-alpha acetylation features.</title>
        <authorList>
            <person name="Bienvenut W.V."/>
            <person name="Sumpton D."/>
            <person name="Martinez A."/>
            <person name="Lilla S."/>
            <person name="Espagne C."/>
            <person name="Meinnel T."/>
            <person name="Giglione C."/>
        </authorList>
    </citation>
    <scope>ACETYLATION [LARGE SCALE ANALYSIS] AT ALA-2</scope>
    <scope>CLEAVAGE OF INITIATOR METHIONINE [LARGE SCALE ANALYSIS]</scope>
    <scope>IDENTIFICATION BY MASS SPECTROMETRY [LARGE SCALE ANALYSIS]</scope>
</reference>
<reference key="6">
    <citation type="journal article" date="2012" name="Proc. Natl. Acad. Sci. U.S.A.">
        <title>N-terminal acetylome analyses and functional insights of the N-terminal acetyltransferase NatB.</title>
        <authorList>
            <person name="Van Damme P."/>
            <person name="Lasa M."/>
            <person name="Polevoda B."/>
            <person name="Gazquez C."/>
            <person name="Elosegui-Artola A."/>
            <person name="Kim D.S."/>
            <person name="De Juan-Pardo E."/>
            <person name="Demeyer K."/>
            <person name="Hole K."/>
            <person name="Larrea E."/>
            <person name="Timmerman E."/>
            <person name="Prieto J."/>
            <person name="Arnesen T."/>
            <person name="Sherman F."/>
            <person name="Gevaert K."/>
            <person name="Aldabe R."/>
        </authorList>
    </citation>
    <scope>ACETYLATION [LARGE SCALE ANALYSIS] AT ALA-2</scope>
    <scope>CLEAVAGE OF INITIATOR METHIONINE [LARGE SCALE ANALYSIS]</scope>
    <scope>IDENTIFICATION BY MASS SPECTROMETRY [LARGE SCALE ANALYSIS]</scope>
</reference>
<reference key="7">
    <citation type="journal article" date="2017" name="Exp. Cell Res.">
        <title>YIPF1, YIPF2, and YIPF6 are medial-/trans-Golgi and trans-Golgi network-localized Yip domain family proteins, which play a role in the Golgi reassembly and glycan synthesis.</title>
        <authorList>
            <person name="Soonthornsit J."/>
            <person name="Sakai N."/>
            <person name="Sasaki Y."/>
            <person name="Watanabe R."/>
            <person name="Osako S."/>
            <person name="Nakamura N."/>
        </authorList>
    </citation>
    <scope>FUNCTION</scope>
    <scope>SUBCELLULAR LOCATION</scope>
    <scope>INTERACTION WITH YIPF1 AND YIPF2</scope>
</reference>
<reference key="8">
    <citation type="journal article" date="2017" name="Histochem. Cell Biol.">
        <title>Functional characterisation of the YIPF protein family in mammalian cells.</title>
        <authorList>
            <person name="Kranjc T."/>
            <person name="Dempsey E."/>
            <person name="Cagney G."/>
            <person name="Nakamura N."/>
            <person name="Shields D.C."/>
            <person name="Simpson J.C."/>
        </authorList>
    </citation>
    <scope>SUBCELLULAR LOCATION</scope>
    <scope>TOPOLOGY</scope>
</reference>
<gene>
    <name type="primary">YIPF6</name>
</gene>
<keyword id="KW-0007">Acetylation</keyword>
<keyword id="KW-0025">Alternative splicing</keyword>
<keyword id="KW-0333">Golgi apparatus</keyword>
<keyword id="KW-0472">Membrane</keyword>
<keyword id="KW-0597">Phosphoprotein</keyword>
<keyword id="KW-1267">Proteomics identification</keyword>
<keyword id="KW-1185">Reference proteome</keyword>
<keyword id="KW-0812">Transmembrane</keyword>
<keyword id="KW-1133">Transmembrane helix</keyword>